<proteinExistence type="inferred from homology"/>
<organism>
    <name type="scientific">Kluyveromyces lactis (strain ATCC 8585 / CBS 2359 / DSM 70799 / NBRC 1267 / NRRL Y-1140 / WM37)</name>
    <name type="common">Yeast</name>
    <name type="synonym">Candida sphaerica</name>
    <dbReference type="NCBI Taxonomy" id="284590"/>
    <lineage>
        <taxon>Eukaryota</taxon>
        <taxon>Fungi</taxon>
        <taxon>Dikarya</taxon>
        <taxon>Ascomycota</taxon>
        <taxon>Saccharomycotina</taxon>
        <taxon>Saccharomycetes</taxon>
        <taxon>Saccharomycetales</taxon>
        <taxon>Saccharomycetaceae</taxon>
        <taxon>Kluyveromyces</taxon>
    </lineage>
</organism>
<dbReference type="EMBL" id="CR382125">
    <property type="protein sequence ID" value="CAG99464.1"/>
    <property type="molecule type" value="Genomic_DNA"/>
</dbReference>
<dbReference type="RefSeq" id="XP_454377.1">
    <property type="nucleotide sequence ID" value="XM_454377.1"/>
</dbReference>
<dbReference type="SMR" id="Q6CNW2"/>
<dbReference type="FunCoup" id="Q6CNW2">
    <property type="interactions" value="61"/>
</dbReference>
<dbReference type="STRING" id="284590.Q6CNW2"/>
<dbReference type="PaxDb" id="284590-Q6CNW2"/>
<dbReference type="KEGG" id="kla:KLLA0_E09461g"/>
<dbReference type="eggNOG" id="KOG0723">
    <property type="taxonomic scope" value="Eukaryota"/>
</dbReference>
<dbReference type="HOGENOM" id="CLU_017633_13_0_1"/>
<dbReference type="InParanoid" id="Q6CNW2"/>
<dbReference type="OMA" id="EGSAEWY"/>
<dbReference type="Proteomes" id="UP000000598">
    <property type="component" value="Chromosome E"/>
</dbReference>
<dbReference type="GO" id="GO:0001405">
    <property type="term" value="C:PAM complex, Tim23 associated import motor"/>
    <property type="evidence" value="ECO:0007669"/>
    <property type="project" value="TreeGrafter"/>
</dbReference>
<dbReference type="GO" id="GO:0001671">
    <property type="term" value="F:ATPase activator activity"/>
    <property type="evidence" value="ECO:0007669"/>
    <property type="project" value="TreeGrafter"/>
</dbReference>
<dbReference type="GO" id="GO:0030150">
    <property type="term" value="P:protein import into mitochondrial matrix"/>
    <property type="evidence" value="ECO:0007669"/>
    <property type="project" value="TreeGrafter"/>
</dbReference>
<dbReference type="FunFam" id="1.10.287.110:FF:000001">
    <property type="entry name" value="Import inner membrane translocase subunit tim14"/>
    <property type="match status" value="1"/>
</dbReference>
<dbReference type="Gene3D" id="1.10.287.110">
    <property type="entry name" value="DnaJ domain"/>
    <property type="match status" value="1"/>
</dbReference>
<dbReference type="InterPro" id="IPR001623">
    <property type="entry name" value="DnaJ_domain"/>
</dbReference>
<dbReference type="InterPro" id="IPR036869">
    <property type="entry name" value="J_dom_sf"/>
</dbReference>
<dbReference type="PANTHER" id="PTHR12763">
    <property type="match status" value="1"/>
</dbReference>
<dbReference type="PANTHER" id="PTHR12763:SF28">
    <property type="entry name" value="GEO10507P1-RELATED"/>
    <property type="match status" value="1"/>
</dbReference>
<dbReference type="SMART" id="SM00271">
    <property type="entry name" value="DnaJ"/>
    <property type="match status" value="1"/>
</dbReference>
<dbReference type="SUPFAM" id="SSF46565">
    <property type="entry name" value="Chaperone J-domain"/>
    <property type="match status" value="1"/>
</dbReference>
<dbReference type="PROSITE" id="PS50076">
    <property type="entry name" value="DNAJ_2"/>
    <property type="match status" value="1"/>
</dbReference>
<name>TIM14_KLULA</name>
<protein>
    <recommendedName>
        <fullName>Mitochondrial import inner membrane translocase subunit TIM14</fullName>
    </recommendedName>
    <alternativeName>
        <fullName>Presequence translocated-associated motor subunit PAM18</fullName>
    </alternativeName>
</protein>
<keyword id="KW-0143">Chaperone</keyword>
<keyword id="KW-0472">Membrane</keyword>
<keyword id="KW-0496">Mitochondrion</keyword>
<keyword id="KW-0999">Mitochondrion inner membrane</keyword>
<keyword id="KW-0653">Protein transport</keyword>
<keyword id="KW-1185">Reference proteome</keyword>
<keyword id="KW-0811">Translocation</keyword>
<keyword id="KW-0812">Transmembrane</keyword>
<keyword id="KW-1133">Transmembrane helix</keyword>
<keyword id="KW-0813">Transport</keyword>
<sequence length="163" mass="17803">MAQQNIEVPQLPIPGEDNSNRVPEQVVIGHPAAGVPPIPQQKSGMDLYFDQALDYMGDHPVLTGVGGFFALYFAAGAYKSVSKRLGGSSQGVKYLKGGFDPKMNAKEALAILNLNETNLSKKKLKEVHRRIMLANHPDKGGSPYLATKINEAKDFLEKKVVRK</sequence>
<reference key="1">
    <citation type="journal article" date="2004" name="Nature">
        <title>Genome evolution in yeasts.</title>
        <authorList>
            <person name="Dujon B."/>
            <person name="Sherman D."/>
            <person name="Fischer G."/>
            <person name="Durrens P."/>
            <person name="Casaregola S."/>
            <person name="Lafontaine I."/>
            <person name="de Montigny J."/>
            <person name="Marck C."/>
            <person name="Neuveglise C."/>
            <person name="Talla E."/>
            <person name="Goffard N."/>
            <person name="Frangeul L."/>
            <person name="Aigle M."/>
            <person name="Anthouard V."/>
            <person name="Babour A."/>
            <person name="Barbe V."/>
            <person name="Barnay S."/>
            <person name="Blanchin S."/>
            <person name="Beckerich J.-M."/>
            <person name="Beyne E."/>
            <person name="Bleykasten C."/>
            <person name="Boisrame A."/>
            <person name="Boyer J."/>
            <person name="Cattolico L."/>
            <person name="Confanioleri F."/>
            <person name="de Daruvar A."/>
            <person name="Despons L."/>
            <person name="Fabre E."/>
            <person name="Fairhead C."/>
            <person name="Ferry-Dumazet H."/>
            <person name="Groppi A."/>
            <person name="Hantraye F."/>
            <person name="Hennequin C."/>
            <person name="Jauniaux N."/>
            <person name="Joyet P."/>
            <person name="Kachouri R."/>
            <person name="Kerrest A."/>
            <person name="Koszul R."/>
            <person name="Lemaire M."/>
            <person name="Lesur I."/>
            <person name="Ma L."/>
            <person name="Muller H."/>
            <person name="Nicaud J.-M."/>
            <person name="Nikolski M."/>
            <person name="Oztas S."/>
            <person name="Ozier-Kalogeropoulos O."/>
            <person name="Pellenz S."/>
            <person name="Potier S."/>
            <person name="Richard G.-F."/>
            <person name="Straub M.-L."/>
            <person name="Suleau A."/>
            <person name="Swennen D."/>
            <person name="Tekaia F."/>
            <person name="Wesolowski-Louvel M."/>
            <person name="Westhof E."/>
            <person name="Wirth B."/>
            <person name="Zeniou-Meyer M."/>
            <person name="Zivanovic Y."/>
            <person name="Bolotin-Fukuhara M."/>
            <person name="Thierry A."/>
            <person name="Bouchier C."/>
            <person name="Caudron B."/>
            <person name="Scarpelli C."/>
            <person name="Gaillardin C."/>
            <person name="Weissenbach J."/>
            <person name="Wincker P."/>
            <person name="Souciet J.-L."/>
        </authorList>
    </citation>
    <scope>NUCLEOTIDE SEQUENCE [LARGE SCALE GENOMIC DNA]</scope>
    <source>
        <strain>ATCC 8585 / CBS 2359 / DSM 70799 / NBRC 1267 / NRRL Y-1140 / WM37</strain>
    </source>
</reference>
<evidence type="ECO:0000250" key="1"/>
<evidence type="ECO:0000255" key="2"/>
<evidence type="ECO:0000255" key="3">
    <source>
        <dbReference type="PROSITE-ProRule" id="PRU00286"/>
    </source>
</evidence>
<evidence type="ECO:0000305" key="4"/>
<feature type="chain" id="PRO_0000071114" description="Mitochondrial import inner membrane translocase subunit TIM14">
    <location>
        <begin position="1"/>
        <end position="163"/>
    </location>
</feature>
<feature type="topological domain" description="Mitochondrial intermembrane" evidence="2">
    <location>
        <begin position="1"/>
        <end position="60"/>
    </location>
</feature>
<feature type="transmembrane region" description="Helical" evidence="2">
    <location>
        <begin position="61"/>
        <end position="78"/>
    </location>
</feature>
<feature type="topological domain" description="Mitochondrial matrix" evidence="2">
    <location>
        <begin position="79"/>
        <end position="163"/>
    </location>
</feature>
<feature type="domain" description="J" evidence="3">
    <location>
        <begin position="107"/>
        <end position="163"/>
    </location>
</feature>
<comment type="function">
    <text evidence="1">Essential component of the PAM complex, a complex required for the translocation of transit peptide-containing proteins from the inner membrane into the mitochondrial matrix in an ATP-dependent manner. In the complex, it is required to stimulate activity of mtHSP70 (SSC1) (By similarity).</text>
</comment>
<comment type="subunit">
    <text evidence="1">Heterodimer with PAM16. Component of the PAM complex, at least composed of mtHsp70, MGE1, TIM44, PAM16, PAM17 and PAM18 (By similarity).</text>
</comment>
<comment type="subcellular location">
    <subcellularLocation>
        <location evidence="1">Mitochondrion inner membrane</location>
        <topology evidence="1">Single-pass membrane protein</topology>
    </subcellularLocation>
</comment>
<comment type="domain">
    <text evidence="1">The J domain is essential for co-chaperone activity and mediates the heterodimerization with the J-like domain of PAM16.</text>
</comment>
<comment type="similarity">
    <text evidence="4">Belongs to the TIM14 family.</text>
</comment>
<gene>
    <name type="primary">PAM18</name>
    <name type="synonym">TIM14</name>
    <name type="ordered locus">KLLA0E09438g</name>
</gene>
<accession>Q6CNW2</accession>